<organism>
    <name type="scientific">Xanthomonas campestris pv. campestris (strain 8004)</name>
    <dbReference type="NCBI Taxonomy" id="314565"/>
    <lineage>
        <taxon>Bacteria</taxon>
        <taxon>Pseudomonadati</taxon>
        <taxon>Pseudomonadota</taxon>
        <taxon>Gammaproteobacteria</taxon>
        <taxon>Lysobacterales</taxon>
        <taxon>Lysobacteraceae</taxon>
        <taxon>Xanthomonas</taxon>
    </lineage>
</organism>
<feature type="chain" id="PRO_0000176025" description="UPF0178 protein XC_1827">
    <location>
        <begin position="1"/>
        <end position="160"/>
    </location>
</feature>
<dbReference type="EMBL" id="CP000050">
    <property type="protein sequence ID" value="AAY48890.1"/>
    <property type="molecule type" value="Genomic_DNA"/>
</dbReference>
<dbReference type="RefSeq" id="WP_011037432.1">
    <property type="nucleotide sequence ID" value="NZ_CP155948.1"/>
</dbReference>
<dbReference type="KEGG" id="xcb:XC_1827"/>
<dbReference type="HOGENOM" id="CLU_106619_2_1_6"/>
<dbReference type="Proteomes" id="UP000000420">
    <property type="component" value="Chromosome"/>
</dbReference>
<dbReference type="CDD" id="cd18720">
    <property type="entry name" value="PIN_YqxD-like"/>
    <property type="match status" value="1"/>
</dbReference>
<dbReference type="HAMAP" id="MF_00489">
    <property type="entry name" value="UPF0178"/>
    <property type="match status" value="1"/>
</dbReference>
<dbReference type="InterPro" id="IPR003791">
    <property type="entry name" value="UPF0178"/>
</dbReference>
<dbReference type="NCBIfam" id="NF001095">
    <property type="entry name" value="PRK00124.1"/>
    <property type="match status" value="1"/>
</dbReference>
<dbReference type="PANTHER" id="PTHR35146">
    <property type="entry name" value="UPF0178 PROTEIN YAII"/>
    <property type="match status" value="1"/>
</dbReference>
<dbReference type="PANTHER" id="PTHR35146:SF1">
    <property type="entry name" value="UPF0178 PROTEIN YAII"/>
    <property type="match status" value="1"/>
</dbReference>
<dbReference type="Pfam" id="PF02639">
    <property type="entry name" value="DUF188"/>
    <property type="match status" value="1"/>
</dbReference>
<sequence length="160" mass="16924">MNTPLPPGLAQIWVDADACPAVIRDILFRAAQRTGIPVTLVANHFLRTPTLAHVRALQVPGGPDAADDAIAERVNAGDLVVTQDIPLAARVLERGAAAVSPRGEPFSSDSIAERLSVRGFLEELRGAGVATGGPPALHARDRQAFAAQLDRWLARQSARS</sequence>
<evidence type="ECO:0000255" key="1">
    <source>
        <dbReference type="HAMAP-Rule" id="MF_00489"/>
    </source>
</evidence>
<accession>Q4UVN3</accession>
<gene>
    <name type="ordered locus">XC_1827</name>
</gene>
<comment type="similarity">
    <text evidence="1">Belongs to the UPF0178 family.</text>
</comment>
<protein>
    <recommendedName>
        <fullName evidence="1">UPF0178 protein XC_1827</fullName>
    </recommendedName>
</protein>
<name>Y1827_XANC8</name>
<reference key="1">
    <citation type="journal article" date="2005" name="Genome Res.">
        <title>Comparative and functional genomic analyses of the pathogenicity of phytopathogen Xanthomonas campestris pv. campestris.</title>
        <authorList>
            <person name="Qian W."/>
            <person name="Jia Y."/>
            <person name="Ren S.-X."/>
            <person name="He Y.-Q."/>
            <person name="Feng J.-X."/>
            <person name="Lu L.-F."/>
            <person name="Sun Q."/>
            <person name="Ying G."/>
            <person name="Tang D.-J."/>
            <person name="Tang H."/>
            <person name="Wu W."/>
            <person name="Hao P."/>
            <person name="Wang L."/>
            <person name="Jiang B.-L."/>
            <person name="Zeng S."/>
            <person name="Gu W.-Y."/>
            <person name="Lu G."/>
            <person name="Rong L."/>
            <person name="Tian Y."/>
            <person name="Yao Z."/>
            <person name="Fu G."/>
            <person name="Chen B."/>
            <person name="Fang R."/>
            <person name="Qiang B."/>
            <person name="Chen Z."/>
            <person name="Zhao G.-P."/>
            <person name="Tang J.-L."/>
            <person name="He C."/>
        </authorList>
    </citation>
    <scope>NUCLEOTIDE SEQUENCE [LARGE SCALE GENOMIC DNA]</scope>
    <source>
        <strain>8004</strain>
    </source>
</reference>
<proteinExistence type="inferred from homology"/>